<accession>Q06GZ8</accession>
<keyword id="KW-0004">4Fe-4S</keyword>
<keyword id="KW-0148">Chlorophyll</keyword>
<keyword id="KW-0150">Chloroplast</keyword>
<keyword id="KW-0157">Chromophore</keyword>
<keyword id="KW-0249">Electron transport</keyword>
<keyword id="KW-0408">Iron</keyword>
<keyword id="KW-0411">Iron-sulfur</keyword>
<keyword id="KW-0460">Magnesium</keyword>
<keyword id="KW-0472">Membrane</keyword>
<keyword id="KW-0479">Metal-binding</keyword>
<keyword id="KW-0560">Oxidoreductase</keyword>
<keyword id="KW-0602">Photosynthesis</keyword>
<keyword id="KW-0603">Photosystem I</keyword>
<keyword id="KW-0934">Plastid</keyword>
<keyword id="KW-0793">Thylakoid</keyword>
<keyword id="KW-0812">Transmembrane</keyword>
<keyword id="KW-1133">Transmembrane helix</keyword>
<keyword id="KW-0813">Transport</keyword>
<reference key="1">
    <citation type="journal article" date="2006" name="BMC Evol. Biol.">
        <title>Complete plastid genome sequences of Drimys, Liriodendron, and Piper: implications for the phylogenetic relationships of magnoliids.</title>
        <authorList>
            <person name="Cai Z."/>
            <person name="Penaflor C."/>
            <person name="Kuehl J.V."/>
            <person name="Leebens-Mack J."/>
            <person name="Carlson J.E."/>
            <person name="dePamphilis C.W."/>
            <person name="Boore J.L."/>
            <person name="Jansen R.K."/>
        </authorList>
    </citation>
    <scope>NUCLEOTIDE SEQUENCE [LARGE SCALE GENOMIC DNA]</scope>
</reference>
<organism>
    <name type="scientific">Drimys granadensis</name>
    <dbReference type="NCBI Taxonomy" id="224735"/>
    <lineage>
        <taxon>Eukaryota</taxon>
        <taxon>Viridiplantae</taxon>
        <taxon>Streptophyta</taxon>
        <taxon>Embryophyta</taxon>
        <taxon>Tracheophyta</taxon>
        <taxon>Spermatophyta</taxon>
        <taxon>Magnoliopsida</taxon>
        <taxon>Magnoliidae</taxon>
        <taxon>Canellales</taxon>
        <taxon>Winteraceae</taxon>
        <taxon>Drimys</taxon>
    </lineage>
</organism>
<proteinExistence type="inferred from homology"/>
<evidence type="ECO:0000255" key="1">
    <source>
        <dbReference type="HAMAP-Rule" id="MF_00482"/>
    </source>
</evidence>
<comment type="function">
    <text evidence="1">PsaA and PsaB bind P700, the primary electron donor of photosystem I (PSI), as well as the electron acceptors A0, A1 and FX. PSI is a plastocyanin-ferredoxin oxidoreductase, converting photonic excitation into a charge separation, which transfers an electron from the donor P700 chlorophyll pair to the spectroscopically characterized acceptors A0, A1, FX, FA and FB in turn. Oxidized P700 is reduced on the lumenal side of the thylakoid membrane by plastocyanin.</text>
</comment>
<comment type="catalytic activity">
    <reaction evidence="1">
        <text>reduced [plastocyanin] + hnu + oxidized [2Fe-2S]-[ferredoxin] = oxidized [plastocyanin] + reduced [2Fe-2S]-[ferredoxin]</text>
        <dbReference type="Rhea" id="RHEA:30407"/>
        <dbReference type="Rhea" id="RHEA-COMP:10000"/>
        <dbReference type="Rhea" id="RHEA-COMP:10001"/>
        <dbReference type="Rhea" id="RHEA-COMP:10039"/>
        <dbReference type="Rhea" id="RHEA-COMP:10040"/>
        <dbReference type="ChEBI" id="CHEBI:29036"/>
        <dbReference type="ChEBI" id="CHEBI:30212"/>
        <dbReference type="ChEBI" id="CHEBI:33737"/>
        <dbReference type="ChEBI" id="CHEBI:33738"/>
        <dbReference type="ChEBI" id="CHEBI:49552"/>
        <dbReference type="EC" id="1.97.1.12"/>
    </reaction>
</comment>
<comment type="cofactor">
    <text evidence="1">P700 is a chlorophyll a/chlorophyll a' dimer, A0 is one or more chlorophyll a, A1 is one or both phylloquinones and FX is a shared 4Fe-4S iron-sulfur center.</text>
</comment>
<comment type="subunit">
    <text evidence="1">The PsaA/B heterodimer binds the P700 chlorophyll special pair and subsequent electron acceptors. PSI consists of a core antenna complex that captures photons, and an electron transfer chain that converts photonic excitation into a charge separation. The eukaryotic PSI reaction center is composed of at least 11 subunits.</text>
</comment>
<comment type="subcellular location">
    <subcellularLocation>
        <location>Plastid</location>
        <location>Chloroplast thylakoid membrane</location>
        <topology>Multi-pass membrane protein</topology>
    </subcellularLocation>
</comment>
<comment type="similarity">
    <text evidence="1">Belongs to the PsaA/PsaB family.</text>
</comment>
<protein>
    <recommendedName>
        <fullName evidence="1">Photosystem I P700 chlorophyll a apoprotein A2</fullName>
        <ecNumber evidence="1">1.97.1.12</ecNumber>
    </recommendedName>
    <alternativeName>
        <fullName evidence="1">PSI-B</fullName>
    </alternativeName>
    <alternativeName>
        <fullName evidence="1">PsaB</fullName>
    </alternativeName>
</protein>
<sequence length="734" mass="82495">MALRFPRFSQGLAQDPTTRRIWFGIATAHDFESHDDITEERLYQNIFASHFGQLAIIFLWTSGNLFHVAWQGNFESWVQDPLHVRPIAHAIWDPHFGQPAVEAFTRGGALGPVNIAYSGVYQWWYTIGLRTNEDLYTGALFLLFLSAISLIAGWLHLQPKWKPSVSWFKNAESRLNHHLSGLFGVSSLAWTGHLVHVAIPGSRGEYVRWNNFLDVLPYPQGLGPLFTGQWNLYAQNPDSSSHLFGTSQGAGTAILTLLGGFHPQTQSLWLTDIAHHHLAIAFLFLVAGHMYRTNFGIGHSMKDLLEAHTPPGGRLGRGHKGLYDTINNSIHFQLGLALASLGVITSLVAQHMYSLPAYAFIAQDFTTQAALYTHHQYIAGFIMTGAFAHGAIFFIRDYNPEQNEDNVLARMLDHKEAIKSHLSWVSLFLGFHTLGLYVHNDVMLAFGTPEKQILIEPIFAQWIQSAHGKTSYGFDVLLSSTNGPAFNAGRSIWLPGWLNAVNENSNSLFLTIGPGDFLVHHAIALGLHTTTLILVKGALDARGSKLMPDKKDFGYSFPCDGPGRGGTCDISAWDAFYLAVFWMLNTIGWVTFYWHWKHITLWQGNVSQFNESSTYLMGWLRDYLWLNSSQLINGYNPFGMNSLSVWAWMFLFGHLVWATGFMFLISWRGYWQELIETLAWAHERTPLANLIRWRDKPVALSIVQARLVGLAHFSVGYIFTYAAFLIASTSGKFG</sequence>
<gene>
    <name evidence="1" type="primary">psaB</name>
</gene>
<name>PSAB_DRIGR</name>
<feature type="chain" id="PRO_0000277112" description="Photosystem I P700 chlorophyll a apoprotein A2">
    <location>
        <begin position="1"/>
        <end position="734"/>
    </location>
</feature>
<feature type="transmembrane region" description="Helical; Name=I" evidence="1">
    <location>
        <begin position="46"/>
        <end position="69"/>
    </location>
</feature>
<feature type="transmembrane region" description="Helical; Name=II" evidence="1">
    <location>
        <begin position="135"/>
        <end position="158"/>
    </location>
</feature>
<feature type="transmembrane region" description="Helical; Name=III" evidence="1">
    <location>
        <begin position="175"/>
        <end position="199"/>
    </location>
</feature>
<feature type="transmembrane region" description="Helical; Name=IV" evidence="1">
    <location>
        <begin position="273"/>
        <end position="291"/>
    </location>
</feature>
<feature type="transmembrane region" description="Helical; Name=V" evidence="1">
    <location>
        <begin position="330"/>
        <end position="353"/>
    </location>
</feature>
<feature type="transmembrane region" description="Helical; Name=VI" evidence="1">
    <location>
        <begin position="369"/>
        <end position="395"/>
    </location>
</feature>
<feature type="transmembrane region" description="Helical; Name=VII" evidence="1">
    <location>
        <begin position="417"/>
        <end position="439"/>
    </location>
</feature>
<feature type="transmembrane region" description="Helical; Name=VIII" evidence="1">
    <location>
        <begin position="517"/>
        <end position="535"/>
    </location>
</feature>
<feature type="transmembrane region" description="Helical; Name=IX" evidence="1">
    <location>
        <begin position="575"/>
        <end position="596"/>
    </location>
</feature>
<feature type="transmembrane region" description="Helical; Name=X" evidence="1">
    <location>
        <begin position="643"/>
        <end position="665"/>
    </location>
</feature>
<feature type="transmembrane region" description="Helical; Name=XI" evidence="1">
    <location>
        <begin position="707"/>
        <end position="727"/>
    </location>
</feature>
<feature type="binding site" evidence="1">
    <location>
        <position position="559"/>
    </location>
    <ligand>
        <name>[4Fe-4S] cluster</name>
        <dbReference type="ChEBI" id="CHEBI:49883"/>
        <note>ligand shared between dimeric partners</note>
    </ligand>
</feature>
<feature type="binding site" evidence="1">
    <location>
        <position position="568"/>
    </location>
    <ligand>
        <name>[4Fe-4S] cluster</name>
        <dbReference type="ChEBI" id="CHEBI:49883"/>
        <note>ligand shared between dimeric partners</note>
    </ligand>
</feature>
<feature type="binding site" description="axial binding residue" evidence="1">
    <location>
        <position position="654"/>
    </location>
    <ligand>
        <name>chlorophyll a</name>
        <dbReference type="ChEBI" id="CHEBI:58416"/>
        <label>B1</label>
    </ligand>
    <ligandPart>
        <name>Mg</name>
        <dbReference type="ChEBI" id="CHEBI:25107"/>
    </ligandPart>
</feature>
<feature type="binding site" description="axial binding residue" evidence="1">
    <location>
        <position position="662"/>
    </location>
    <ligand>
        <name>chlorophyll a</name>
        <dbReference type="ChEBI" id="CHEBI:58416"/>
        <label>B3</label>
    </ligand>
    <ligandPart>
        <name>Mg</name>
        <dbReference type="ChEBI" id="CHEBI:25107"/>
    </ligandPart>
</feature>
<feature type="binding site" evidence="1">
    <location>
        <position position="670"/>
    </location>
    <ligand>
        <name>chlorophyll a</name>
        <dbReference type="ChEBI" id="CHEBI:58416"/>
        <label>B3</label>
    </ligand>
</feature>
<feature type="binding site" evidence="1">
    <location>
        <position position="671"/>
    </location>
    <ligand>
        <name>phylloquinone</name>
        <dbReference type="ChEBI" id="CHEBI:18067"/>
        <label>B</label>
    </ligand>
</feature>
<dbReference type="EC" id="1.97.1.12" evidence="1"/>
<dbReference type="EMBL" id="DQ887676">
    <property type="protein sequence ID" value="ABH88296.1"/>
    <property type="molecule type" value="Genomic_DNA"/>
</dbReference>
<dbReference type="RefSeq" id="YP_784385.1">
    <property type="nucleotide sequence ID" value="NC_008456.1"/>
</dbReference>
<dbReference type="SMR" id="Q06GZ8"/>
<dbReference type="GeneID" id="4363549"/>
<dbReference type="GO" id="GO:0009535">
    <property type="term" value="C:chloroplast thylakoid membrane"/>
    <property type="evidence" value="ECO:0007669"/>
    <property type="project" value="UniProtKB-SubCell"/>
</dbReference>
<dbReference type="GO" id="GO:0009522">
    <property type="term" value="C:photosystem I"/>
    <property type="evidence" value="ECO:0007669"/>
    <property type="project" value="UniProtKB-KW"/>
</dbReference>
<dbReference type="GO" id="GO:0051539">
    <property type="term" value="F:4 iron, 4 sulfur cluster binding"/>
    <property type="evidence" value="ECO:0007669"/>
    <property type="project" value="UniProtKB-KW"/>
</dbReference>
<dbReference type="GO" id="GO:0016168">
    <property type="term" value="F:chlorophyll binding"/>
    <property type="evidence" value="ECO:0007669"/>
    <property type="project" value="UniProtKB-KW"/>
</dbReference>
<dbReference type="GO" id="GO:0009055">
    <property type="term" value="F:electron transfer activity"/>
    <property type="evidence" value="ECO:0007669"/>
    <property type="project" value="UniProtKB-UniRule"/>
</dbReference>
<dbReference type="GO" id="GO:0000287">
    <property type="term" value="F:magnesium ion binding"/>
    <property type="evidence" value="ECO:0007669"/>
    <property type="project" value="UniProtKB-UniRule"/>
</dbReference>
<dbReference type="GO" id="GO:0016491">
    <property type="term" value="F:oxidoreductase activity"/>
    <property type="evidence" value="ECO:0007669"/>
    <property type="project" value="UniProtKB-KW"/>
</dbReference>
<dbReference type="GO" id="GO:0015979">
    <property type="term" value="P:photosynthesis"/>
    <property type="evidence" value="ECO:0007669"/>
    <property type="project" value="UniProtKB-UniRule"/>
</dbReference>
<dbReference type="FunFam" id="1.20.1130.10:FF:000001">
    <property type="entry name" value="Photosystem I P700 chlorophyll a apoprotein A2"/>
    <property type="match status" value="1"/>
</dbReference>
<dbReference type="Gene3D" id="1.20.1130.10">
    <property type="entry name" value="Photosystem I PsaA/PsaB"/>
    <property type="match status" value="1"/>
</dbReference>
<dbReference type="HAMAP" id="MF_00482">
    <property type="entry name" value="PSI_PsaB"/>
    <property type="match status" value="1"/>
</dbReference>
<dbReference type="InterPro" id="IPR001280">
    <property type="entry name" value="PSI_PsaA/B"/>
</dbReference>
<dbReference type="InterPro" id="IPR020586">
    <property type="entry name" value="PSI_PsaA/B_CS"/>
</dbReference>
<dbReference type="InterPro" id="IPR036408">
    <property type="entry name" value="PSI_PsaA/B_sf"/>
</dbReference>
<dbReference type="InterPro" id="IPR006244">
    <property type="entry name" value="PSI_PsaB"/>
</dbReference>
<dbReference type="NCBIfam" id="TIGR01336">
    <property type="entry name" value="psaB"/>
    <property type="match status" value="1"/>
</dbReference>
<dbReference type="PANTHER" id="PTHR30128">
    <property type="entry name" value="OUTER MEMBRANE PROTEIN, OMPA-RELATED"/>
    <property type="match status" value="1"/>
</dbReference>
<dbReference type="PANTHER" id="PTHR30128:SF19">
    <property type="entry name" value="PHOTOSYSTEM I P700 CHLOROPHYLL A APOPROTEIN A1-RELATED"/>
    <property type="match status" value="1"/>
</dbReference>
<dbReference type="Pfam" id="PF00223">
    <property type="entry name" value="PsaA_PsaB"/>
    <property type="match status" value="1"/>
</dbReference>
<dbReference type="PIRSF" id="PIRSF002905">
    <property type="entry name" value="PSI_A"/>
    <property type="match status" value="1"/>
</dbReference>
<dbReference type="PRINTS" id="PR00257">
    <property type="entry name" value="PHOTSYSPSAAB"/>
</dbReference>
<dbReference type="SUPFAM" id="SSF81558">
    <property type="entry name" value="Photosystem I subunits PsaA/PsaB"/>
    <property type="match status" value="1"/>
</dbReference>
<dbReference type="PROSITE" id="PS00419">
    <property type="entry name" value="PHOTOSYSTEM_I_PSAAB"/>
    <property type="match status" value="1"/>
</dbReference>
<geneLocation type="chloroplast"/>